<accession>B7JVZ9</accession>
<keyword id="KW-0028">Amino-acid biosynthesis</keyword>
<keyword id="KW-0057">Aromatic amino acid biosynthesis</keyword>
<keyword id="KW-0274">FAD</keyword>
<keyword id="KW-0285">Flavoprotein</keyword>
<keyword id="KW-0288">FMN</keyword>
<keyword id="KW-0456">Lyase</keyword>
<keyword id="KW-0521">NADP</keyword>
<keyword id="KW-1185">Reference proteome</keyword>
<reference key="1">
    <citation type="journal article" date="2011" name="MBio">
        <title>Novel metabolic attributes of the genus Cyanothece, comprising a group of unicellular nitrogen-fixing Cyanobacteria.</title>
        <authorList>
            <person name="Bandyopadhyay A."/>
            <person name="Elvitigala T."/>
            <person name="Welsh E."/>
            <person name="Stockel J."/>
            <person name="Liberton M."/>
            <person name="Min H."/>
            <person name="Sherman L.A."/>
            <person name="Pakrasi H.B."/>
        </authorList>
    </citation>
    <scope>NUCLEOTIDE SEQUENCE [LARGE SCALE GENOMIC DNA]</scope>
    <source>
        <strain>PCC 8801 / RF-1</strain>
    </source>
</reference>
<protein>
    <recommendedName>
        <fullName evidence="1">Chorismate synthase</fullName>
        <shortName evidence="1">CS</shortName>
        <ecNumber evidence="1">4.2.3.5</ecNumber>
    </recommendedName>
    <alternativeName>
        <fullName evidence="1">5-enolpyruvylshikimate-3-phosphate phospholyase</fullName>
    </alternativeName>
</protein>
<name>AROC_RIPO1</name>
<organism>
    <name type="scientific">Rippkaea orientalis (strain PCC 8801 / RF-1)</name>
    <name type="common">Cyanothece sp. (strain PCC 8801)</name>
    <dbReference type="NCBI Taxonomy" id="41431"/>
    <lineage>
        <taxon>Bacteria</taxon>
        <taxon>Bacillati</taxon>
        <taxon>Cyanobacteriota</taxon>
        <taxon>Cyanophyceae</taxon>
        <taxon>Oscillatoriophycideae</taxon>
        <taxon>Chroococcales</taxon>
        <taxon>Aphanothecaceae</taxon>
        <taxon>Rippkaea</taxon>
        <taxon>Rippkaea orientalis</taxon>
    </lineage>
</organism>
<feature type="chain" id="PRO_1000119486" description="Chorismate synthase">
    <location>
        <begin position="1"/>
        <end position="362"/>
    </location>
</feature>
<feature type="binding site" evidence="1">
    <location>
        <position position="47"/>
    </location>
    <ligand>
        <name>NADP(+)</name>
        <dbReference type="ChEBI" id="CHEBI:58349"/>
    </ligand>
</feature>
<feature type="binding site" evidence="1">
    <location>
        <begin position="124"/>
        <end position="126"/>
    </location>
    <ligand>
        <name>FMN</name>
        <dbReference type="ChEBI" id="CHEBI:58210"/>
    </ligand>
</feature>
<feature type="binding site" evidence="1">
    <location>
        <position position="286"/>
    </location>
    <ligand>
        <name>FMN</name>
        <dbReference type="ChEBI" id="CHEBI:58210"/>
    </ligand>
</feature>
<feature type="binding site" evidence="1">
    <location>
        <begin position="301"/>
        <end position="305"/>
    </location>
    <ligand>
        <name>FMN</name>
        <dbReference type="ChEBI" id="CHEBI:58210"/>
    </ligand>
</feature>
<feature type="binding site" evidence="1">
    <location>
        <position position="327"/>
    </location>
    <ligand>
        <name>FMN</name>
        <dbReference type="ChEBI" id="CHEBI:58210"/>
    </ligand>
</feature>
<dbReference type="EC" id="4.2.3.5" evidence="1"/>
<dbReference type="EMBL" id="CP001287">
    <property type="protein sequence ID" value="ACK65688.1"/>
    <property type="molecule type" value="Genomic_DNA"/>
</dbReference>
<dbReference type="RefSeq" id="WP_012594961.1">
    <property type="nucleotide sequence ID" value="NC_011726.1"/>
</dbReference>
<dbReference type="SMR" id="B7JVZ9"/>
<dbReference type="STRING" id="41431.PCC8801_1637"/>
<dbReference type="KEGG" id="cyp:PCC8801_1637"/>
<dbReference type="eggNOG" id="COG0082">
    <property type="taxonomic scope" value="Bacteria"/>
</dbReference>
<dbReference type="HOGENOM" id="CLU_034547_0_1_3"/>
<dbReference type="OrthoDB" id="9771806at2"/>
<dbReference type="UniPathway" id="UPA00053">
    <property type="reaction ID" value="UER00090"/>
</dbReference>
<dbReference type="Proteomes" id="UP000008204">
    <property type="component" value="Chromosome"/>
</dbReference>
<dbReference type="GO" id="GO:0005829">
    <property type="term" value="C:cytosol"/>
    <property type="evidence" value="ECO:0007669"/>
    <property type="project" value="TreeGrafter"/>
</dbReference>
<dbReference type="GO" id="GO:0004107">
    <property type="term" value="F:chorismate synthase activity"/>
    <property type="evidence" value="ECO:0007669"/>
    <property type="project" value="UniProtKB-UniRule"/>
</dbReference>
<dbReference type="GO" id="GO:0010181">
    <property type="term" value="F:FMN binding"/>
    <property type="evidence" value="ECO:0007669"/>
    <property type="project" value="TreeGrafter"/>
</dbReference>
<dbReference type="GO" id="GO:0008652">
    <property type="term" value="P:amino acid biosynthetic process"/>
    <property type="evidence" value="ECO:0007669"/>
    <property type="project" value="UniProtKB-KW"/>
</dbReference>
<dbReference type="GO" id="GO:0009073">
    <property type="term" value="P:aromatic amino acid family biosynthetic process"/>
    <property type="evidence" value="ECO:0007669"/>
    <property type="project" value="UniProtKB-KW"/>
</dbReference>
<dbReference type="GO" id="GO:0009423">
    <property type="term" value="P:chorismate biosynthetic process"/>
    <property type="evidence" value="ECO:0007669"/>
    <property type="project" value="UniProtKB-UniRule"/>
</dbReference>
<dbReference type="CDD" id="cd07304">
    <property type="entry name" value="Chorismate_synthase"/>
    <property type="match status" value="1"/>
</dbReference>
<dbReference type="FunFam" id="3.60.150.10:FF:000003">
    <property type="entry name" value="Chorismate synthase"/>
    <property type="match status" value="1"/>
</dbReference>
<dbReference type="Gene3D" id="3.60.150.10">
    <property type="entry name" value="Chorismate synthase AroC"/>
    <property type="match status" value="1"/>
</dbReference>
<dbReference type="HAMAP" id="MF_00300">
    <property type="entry name" value="Chorismate_synth"/>
    <property type="match status" value="1"/>
</dbReference>
<dbReference type="InterPro" id="IPR000453">
    <property type="entry name" value="Chorismate_synth"/>
</dbReference>
<dbReference type="InterPro" id="IPR035904">
    <property type="entry name" value="Chorismate_synth_AroC_sf"/>
</dbReference>
<dbReference type="InterPro" id="IPR020541">
    <property type="entry name" value="Chorismate_synthase_CS"/>
</dbReference>
<dbReference type="NCBIfam" id="TIGR00033">
    <property type="entry name" value="aroC"/>
    <property type="match status" value="1"/>
</dbReference>
<dbReference type="NCBIfam" id="NF003793">
    <property type="entry name" value="PRK05382.1"/>
    <property type="match status" value="1"/>
</dbReference>
<dbReference type="PANTHER" id="PTHR21085">
    <property type="entry name" value="CHORISMATE SYNTHASE"/>
    <property type="match status" value="1"/>
</dbReference>
<dbReference type="PANTHER" id="PTHR21085:SF0">
    <property type="entry name" value="CHORISMATE SYNTHASE"/>
    <property type="match status" value="1"/>
</dbReference>
<dbReference type="Pfam" id="PF01264">
    <property type="entry name" value="Chorismate_synt"/>
    <property type="match status" value="1"/>
</dbReference>
<dbReference type="PIRSF" id="PIRSF001456">
    <property type="entry name" value="Chorismate_synth"/>
    <property type="match status" value="1"/>
</dbReference>
<dbReference type="SUPFAM" id="SSF103263">
    <property type="entry name" value="Chorismate synthase, AroC"/>
    <property type="match status" value="1"/>
</dbReference>
<dbReference type="PROSITE" id="PS00787">
    <property type="entry name" value="CHORISMATE_SYNTHASE_1"/>
    <property type="match status" value="1"/>
</dbReference>
<dbReference type="PROSITE" id="PS00788">
    <property type="entry name" value="CHORISMATE_SYNTHASE_2"/>
    <property type="match status" value="1"/>
</dbReference>
<dbReference type="PROSITE" id="PS00789">
    <property type="entry name" value="CHORISMATE_SYNTHASE_3"/>
    <property type="match status" value="1"/>
</dbReference>
<comment type="function">
    <text evidence="1">Catalyzes the anti-1,4-elimination of the C-3 phosphate and the C-6 proR hydrogen from 5-enolpyruvylshikimate-3-phosphate (EPSP) to yield chorismate, which is the branch point compound that serves as the starting substrate for the three terminal pathways of aromatic amino acid biosynthesis. This reaction introduces a second double bond into the aromatic ring system.</text>
</comment>
<comment type="catalytic activity">
    <reaction evidence="1">
        <text>5-O-(1-carboxyvinyl)-3-phosphoshikimate = chorismate + phosphate</text>
        <dbReference type="Rhea" id="RHEA:21020"/>
        <dbReference type="ChEBI" id="CHEBI:29748"/>
        <dbReference type="ChEBI" id="CHEBI:43474"/>
        <dbReference type="ChEBI" id="CHEBI:57701"/>
        <dbReference type="EC" id="4.2.3.5"/>
    </reaction>
</comment>
<comment type="cofactor">
    <cofactor evidence="1">
        <name>FMNH2</name>
        <dbReference type="ChEBI" id="CHEBI:57618"/>
    </cofactor>
    <text evidence="1">Reduced FMN (FMNH(2)).</text>
</comment>
<comment type="pathway">
    <text evidence="1">Metabolic intermediate biosynthesis; chorismate biosynthesis; chorismate from D-erythrose 4-phosphate and phosphoenolpyruvate: step 7/7.</text>
</comment>
<comment type="subunit">
    <text evidence="1">Homotetramer.</text>
</comment>
<comment type="similarity">
    <text evidence="1">Belongs to the chorismate synthase family.</text>
</comment>
<gene>
    <name evidence="1" type="primary">aroC</name>
    <name type="ordered locus">PCC8801_1637</name>
</gene>
<evidence type="ECO:0000255" key="1">
    <source>
        <dbReference type="HAMAP-Rule" id="MF_00300"/>
    </source>
</evidence>
<proteinExistence type="inferred from homology"/>
<sequence length="362" mass="39225">MGNTFGHLFRITTFGESHGGGVGVVIDGCPPRLEISESDIQYDLDRRRPGQSKITTPRHESDTCEIISGVFEGKTLGTPIAILVRNKDQRSQDYDEMSVKLRPSHADATYEAKYGIRNWQGGGRSSARETIGRVAAGAIAKKILKQVANVEIIGYVKRIKDLEGMVDPSTVTLENVESNIVRCPDPEMAEKMIDLIDQTRRNKDSIGGVVECVARNIPKGLGQPVFDKLEADLAKGVMSLPASKGFEIGSGFAGTLLTGSEHNDEFYLDETGEIRTTTNRSGGIQGGISNGENIIIRVAFKPTATIGKEQKTVTNTGEETTLAAKGRHDPCVLPRAVPMVEAMVALVLCDHLLRQEGQCGLF</sequence>